<sequence>MNVFYDKDADLSLIKGKQVTIIGYGSQGHAHALNLKDSGVNVTVGLRKDGASWSKAENAGLSVKEVAEAVKGADVVMMLLPDEQIADVYAKEVHANIKQGAALAFAHGFNVHYGQVIPRADLDVIMIAPKAPGHTVRGTYSQGGGVPHLIAVAQNKSGAARDIALSYAAANGGGRAGIIETNFREETETDLFGEQAVLCGGTVELIKAGFETLVEAGYAPEMAYFECLHELKLIVDLIYEGGIANMNYSISNNAEYGEYVTGPRVVTEETKKAMKQCLTDIQTGEYAKSFILENKAGAPTLQSRRRLTAEHQIEQVGAKLRAMMPWIAKNKLVDQTKN</sequence>
<evidence type="ECO:0000255" key="1">
    <source>
        <dbReference type="HAMAP-Rule" id="MF_00435"/>
    </source>
</evidence>
<evidence type="ECO:0000255" key="2">
    <source>
        <dbReference type="PROSITE-ProRule" id="PRU01197"/>
    </source>
</evidence>
<evidence type="ECO:0000255" key="3">
    <source>
        <dbReference type="PROSITE-ProRule" id="PRU01198"/>
    </source>
</evidence>
<proteinExistence type="inferred from homology"/>
<organism>
    <name type="scientific">Burkholderia ambifaria (strain ATCC BAA-244 / DSM 16087 / CCUG 44356 / LMG 19182 / AMMD)</name>
    <name type="common">Burkholderia cepacia (strain AMMD)</name>
    <dbReference type="NCBI Taxonomy" id="339670"/>
    <lineage>
        <taxon>Bacteria</taxon>
        <taxon>Pseudomonadati</taxon>
        <taxon>Pseudomonadota</taxon>
        <taxon>Betaproteobacteria</taxon>
        <taxon>Burkholderiales</taxon>
        <taxon>Burkholderiaceae</taxon>
        <taxon>Burkholderia</taxon>
        <taxon>Burkholderia cepacia complex</taxon>
    </lineage>
</organism>
<name>ILVC_BURCM</name>
<dbReference type="EC" id="1.1.1.86" evidence="1"/>
<dbReference type="EMBL" id="CP000440">
    <property type="protein sequence ID" value="ABI87857.1"/>
    <property type="molecule type" value="Genomic_DNA"/>
</dbReference>
<dbReference type="RefSeq" id="WP_006750446.1">
    <property type="nucleotide sequence ID" value="NZ_CP009798.1"/>
</dbReference>
<dbReference type="SMR" id="Q0BDB6"/>
<dbReference type="GeneID" id="93085491"/>
<dbReference type="KEGG" id="bam:Bamb_2301"/>
<dbReference type="PATRIC" id="fig|339670.21.peg.2626"/>
<dbReference type="eggNOG" id="COG0059">
    <property type="taxonomic scope" value="Bacteria"/>
</dbReference>
<dbReference type="UniPathway" id="UPA00047">
    <property type="reaction ID" value="UER00056"/>
</dbReference>
<dbReference type="UniPathway" id="UPA00049">
    <property type="reaction ID" value="UER00060"/>
</dbReference>
<dbReference type="Proteomes" id="UP000000662">
    <property type="component" value="Chromosome 1"/>
</dbReference>
<dbReference type="GO" id="GO:0005829">
    <property type="term" value="C:cytosol"/>
    <property type="evidence" value="ECO:0007669"/>
    <property type="project" value="TreeGrafter"/>
</dbReference>
<dbReference type="GO" id="GO:0004455">
    <property type="term" value="F:ketol-acid reductoisomerase activity"/>
    <property type="evidence" value="ECO:0007669"/>
    <property type="project" value="UniProtKB-UniRule"/>
</dbReference>
<dbReference type="GO" id="GO:0000287">
    <property type="term" value="F:magnesium ion binding"/>
    <property type="evidence" value="ECO:0007669"/>
    <property type="project" value="UniProtKB-UniRule"/>
</dbReference>
<dbReference type="GO" id="GO:0050661">
    <property type="term" value="F:NADP binding"/>
    <property type="evidence" value="ECO:0007669"/>
    <property type="project" value="InterPro"/>
</dbReference>
<dbReference type="GO" id="GO:0009097">
    <property type="term" value="P:isoleucine biosynthetic process"/>
    <property type="evidence" value="ECO:0007669"/>
    <property type="project" value="UniProtKB-UniRule"/>
</dbReference>
<dbReference type="GO" id="GO:0009099">
    <property type="term" value="P:L-valine biosynthetic process"/>
    <property type="evidence" value="ECO:0007669"/>
    <property type="project" value="UniProtKB-UniRule"/>
</dbReference>
<dbReference type="FunFam" id="3.40.50.720:FF:000023">
    <property type="entry name" value="Ketol-acid reductoisomerase (NADP(+))"/>
    <property type="match status" value="1"/>
</dbReference>
<dbReference type="Gene3D" id="6.10.240.10">
    <property type="match status" value="1"/>
</dbReference>
<dbReference type="Gene3D" id="3.40.50.720">
    <property type="entry name" value="NAD(P)-binding Rossmann-like Domain"/>
    <property type="match status" value="1"/>
</dbReference>
<dbReference type="HAMAP" id="MF_00435">
    <property type="entry name" value="IlvC"/>
    <property type="match status" value="1"/>
</dbReference>
<dbReference type="InterPro" id="IPR008927">
    <property type="entry name" value="6-PGluconate_DH-like_C_sf"/>
</dbReference>
<dbReference type="InterPro" id="IPR013023">
    <property type="entry name" value="KARI"/>
</dbReference>
<dbReference type="InterPro" id="IPR000506">
    <property type="entry name" value="KARI_C"/>
</dbReference>
<dbReference type="InterPro" id="IPR013116">
    <property type="entry name" value="KARI_N"/>
</dbReference>
<dbReference type="InterPro" id="IPR014359">
    <property type="entry name" value="KARI_prok"/>
</dbReference>
<dbReference type="InterPro" id="IPR036291">
    <property type="entry name" value="NAD(P)-bd_dom_sf"/>
</dbReference>
<dbReference type="NCBIfam" id="TIGR00465">
    <property type="entry name" value="ilvC"/>
    <property type="match status" value="1"/>
</dbReference>
<dbReference type="NCBIfam" id="NF004017">
    <property type="entry name" value="PRK05479.1"/>
    <property type="match status" value="1"/>
</dbReference>
<dbReference type="NCBIfam" id="NF009940">
    <property type="entry name" value="PRK13403.1"/>
    <property type="match status" value="1"/>
</dbReference>
<dbReference type="PANTHER" id="PTHR21371">
    <property type="entry name" value="KETOL-ACID REDUCTOISOMERASE, MITOCHONDRIAL"/>
    <property type="match status" value="1"/>
</dbReference>
<dbReference type="PANTHER" id="PTHR21371:SF1">
    <property type="entry name" value="KETOL-ACID REDUCTOISOMERASE, MITOCHONDRIAL"/>
    <property type="match status" value="1"/>
</dbReference>
<dbReference type="Pfam" id="PF01450">
    <property type="entry name" value="KARI_C"/>
    <property type="match status" value="1"/>
</dbReference>
<dbReference type="Pfam" id="PF07991">
    <property type="entry name" value="KARI_N"/>
    <property type="match status" value="1"/>
</dbReference>
<dbReference type="PIRSF" id="PIRSF000116">
    <property type="entry name" value="IlvC_gammaproteo"/>
    <property type="match status" value="1"/>
</dbReference>
<dbReference type="SUPFAM" id="SSF48179">
    <property type="entry name" value="6-phosphogluconate dehydrogenase C-terminal domain-like"/>
    <property type="match status" value="1"/>
</dbReference>
<dbReference type="SUPFAM" id="SSF51735">
    <property type="entry name" value="NAD(P)-binding Rossmann-fold domains"/>
    <property type="match status" value="1"/>
</dbReference>
<dbReference type="PROSITE" id="PS51851">
    <property type="entry name" value="KARI_C"/>
    <property type="match status" value="1"/>
</dbReference>
<dbReference type="PROSITE" id="PS51850">
    <property type="entry name" value="KARI_N"/>
    <property type="match status" value="1"/>
</dbReference>
<protein>
    <recommendedName>
        <fullName evidence="1">Ketol-acid reductoisomerase (NADP(+))</fullName>
        <shortName evidence="1">KARI</shortName>
        <ecNumber evidence="1">1.1.1.86</ecNumber>
    </recommendedName>
    <alternativeName>
        <fullName evidence="1">Acetohydroxy-acid isomeroreductase</fullName>
        <shortName evidence="1">AHIR</shortName>
    </alternativeName>
    <alternativeName>
        <fullName evidence="1">Alpha-keto-beta-hydroxylacyl reductoisomerase</fullName>
    </alternativeName>
    <alternativeName>
        <fullName evidence="1">Ketol-acid reductoisomerase type 1</fullName>
    </alternativeName>
    <alternativeName>
        <fullName evidence="1">Ketol-acid reductoisomerase type I</fullName>
    </alternativeName>
</protein>
<feature type="chain" id="PRO_1000050485" description="Ketol-acid reductoisomerase (NADP(+))">
    <location>
        <begin position="1"/>
        <end position="338"/>
    </location>
</feature>
<feature type="domain" description="KARI N-terminal Rossmann" evidence="2">
    <location>
        <begin position="1"/>
        <end position="181"/>
    </location>
</feature>
<feature type="domain" description="KARI C-terminal knotted" evidence="3">
    <location>
        <begin position="182"/>
        <end position="327"/>
    </location>
</feature>
<feature type="active site" evidence="1">
    <location>
        <position position="107"/>
    </location>
</feature>
<feature type="binding site" evidence="1">
    <location>
        <begin position="24"/>
        <end position="27"/>
    </location>
    <ligand>
        <name>NADP(+)</name>
        <dbReference type="ChEBI" id="CHEBI:58349"/>
    </ligand>
</feature>
<feature type="binding site" evidence="1">
    <location>
        <position position="47"/>
    </location>
    <ligand>
        <name>NADP(+)</name>
        <dbReference type="ChEBI" id="CHEBI:58349"/>
    </ligand>
</feature>
<feature type="binding site" evidence="1">
    <location>
        <position position="52"/>
    </location>
    <ligand>
        <name>NADP(+)</name>
        <dbReference type="ChEBI" id="CHEBI:58349"/>
    </ligand>
</feature>
<feature type="binding site" evidence="1">
    <location>
        <position position="133"/>
    </location>
    <ligand>
        <name>NADP(+)</name>
        <dbReference type="ChEBI" id="CHEBI:58349"/>
    </ligand>
</feature>
<feature type="binding site" evidence="1">
    <location>
        <position position="190"/>
    </location>
    <ligand>
        <name>Mg(2+)</name>
        <dbReference type="ChEBI" id="CHEBI:18420"/>
        <label>1</label>
    </ligand>
</feature>
<feature type="binding site" evidence="1">
    <location>
        <position position="190"/>
    </location>
    <ligand>
        <name>Mg(2+)</name>
        <dbReference type="ChEBI" id="CHEBI:18420"/>
        <label>2</label>
    </ligand>
</feature>
<feature type="binding site" evidence="1">
    <location>
        <position position="194"/>
    </location>
    <ligand>
        <name>Mg(2+)</name>
        <dbReference type="ChEBI" id="CHEBI:18420"/>
        <label>1</label>
    </ligand>
</feature>
<feature type="binding site" evidence="1">
    <location>
        <position position="226"/>
    </location>
    <ligand>
        <name>Mg(2+)</name>
        <dbReference type="ChEBI" id="CHEBI:18420"/>
        <label>2</label>
    </ligand>
</feature>
<feature type="binding site" evidence="1">
    <location>
        <position position="230"/>
    </location>
    <ligand>
        <name>Mg(2+)</name>
        <dbReference type="ChEBI" id="CHEBI:18420"/>
        <label>2</label>
    </ligand>
</feature>
<feature type="binding site" evidence="1">
    <location>
        <position position="251"/>
    </location>
    <ligand>
        <name>substrate</name>
    </ligand>
</feature>
<comment type="function">
    <text evidence="1">Involved in the biosynthesis of branched-chain amino acids (BCAA). Catalyzes an alkyl-migration followed by a ketol-acid reduction of (S)-2-acetolactate (S2AL) to yield (R)-2,3-dihydroxy-isovalerate. In the isomerase reaction, S2AL is rearranged via a Mg-dependent methyl migration to produce 3-hydroxy-3-methyl-2-ketobutyrate (HMKB). In the reductase reaction, this 2-ketoacid undergoes a metal-dependent reduction by NADPH to yield (R)-2,3-dihydroxy-isovalerate.</text>
</comment>
<comment type="catalytic activity">
    <reaction evidence="1">
        <text>(2R)-2,3-dihydroxy-3-methylbutanoate + NADP(+) = (2S)-2-acetolactate + NADPH + H(+)</text>
        <dbReference type="Rhea" id="RHEA:22068"/>
        <dbReference type="ChEBI" id="CHEBI:15378"/>
        <dbReference type="ChEBI" id="CHEBI:49072"/>
        <dbReference type="ChEBI" id="CHEBI:57783"/>
        <dbReference type="ChEBI" id="CHEBI:58349"/>
        <dbReference type="ChEBI" id="CHEBI:58476"/>
        <dbReference type="EC" id="1.1.1.86"/>
    </reaction>
</comment>
<comment type="catalytic activity">
    <reaction evidence="1">
        <text>(2R,3R)-2,3-dihydroxy-3-methylpentanoate + NADP(+) = (S)-2-ethyl-2-hydroxy-3-oxobutanoate + NADPH + H(+)</text>
        <dbReference type="Rhea" id="RHEA:13493"/>
        <dbReference type="ChEBI" id="CHEBI:15378"/>
        <dbReference type="ChEBI" id="CHEBI:49256"/>
        <dbReference type="ChEBI" id="CHEBI:49258"/>
        <dbReference type="ChEBI" id="CHEBI:57783"/>
        <dbReference type="ChEBI" id="CHEBI:58349"/>
        <dbReference type="EC" id="1.1.1.86"/>
    </reaction>
</comment>
<comment type="cofactor">
    <cofactor evidence="1">
        <name>Mg(2+)</name>
        <dbReference type="ChEBI" id="CHEBI:18420"/>
    </cofactor>
    <text evidence="1">Binds 2 magnesium ions per subunit.</text>
</comment>
<comment type="pathway">
    <text evidence="1">Amino-acid biosynthesis; L-isoleucine biosynthesis; L-isoleucine from 2-oxobutanoate: step 2/4.</text>
</comment>
<comment type="pathway">
    <text evidence="1">Amino-acid biosynthesis; L-valine biosynthesis; L-valine from pyruvate: step 2/4.</text>
</comment>
<comment type="similarity">
    <text evidence="1">Belongs to the ketol-acid reductoisomerase family.</text>
</comment>
<gene>
    <name evidence="1" type="primary">ilvC</name>
    <name type="ordered locus">Bamb_2301</name>
</gene>
<reference key="1">
    <citation type="submission" date="2006-08" db="EMBL/GenBank/DDBJ databases">
        <title>Complete sequence of chromosome 1 of Burkholderia cepacia AMMD.</title>
        <authorList>
            <person name="Copeland A."/>
            <person name="Lucas S."/>
            <person name="Lapidus A."/>
            <person name="Barry K."/>
            <person name="Detter J.C."/>
            <person name="Glavina del Rio T."/>
            <person name="Hammon N."/>
            <person name="Israni S."/>
            <person name="Pitluck S."/>
            <person name="Bruce D."/>
            <person name="Chain P."/>
            <person name="Malfatti S."/>
            <person name="Shin M."/>
            <person name="Vergez L."/>
            <person name="Schmutz J."/>
            <person name="Larimer F."/>
            <person name="Land M."/>
            <person name="Hauser L."/>
            <person name="Kyrpides N."/>
            <person name="Kim E."/>
            <person name="Parke J."/>
            <person name="Coenye T."/>
            <person name="Konstantinidis K."/>
            <person name="Ramette A."/>
            <person name="Tiedje J."/>
            <person name="Richardson P."/>
        </authorList>
    </citation>
    <scope>NUCLEOTIDE SEQUENCE [LARGE SCALE GENOMIC DNA]</scope>
    <source>
        <strain>ATCC BAA-244 / DSM 16087 / CCUG 44356 / LMG 19182 / AMMD</strain>
    </source>
</reference>
<accession>Q0BDB6</accession>
<keyword id="KW-0028">Amino-acid biosynthesis</keyword>
<keyword id="KW-0100">Branched-chain amino acid biosynthesis</keyword>
<keyword id="KW-0460">Magnesium</keyword>
<keyword id="KW-0479">Metal-binding</keyword>
<keyword id="KW-0521">NADP</keyword>
<keyword id="KW-0560">Oxidoreductase</keyword>